<proteinExistence type="inferred from homology"/>
<evidence type="ECO:0000255" key="1">
    <source>
        <dbReference type="HAMAP-Rule" id="MF_01365"/>
    </source>
</evidence>
<evidence type="ECO:0000305" key="2"/>
<reference key="1">
    <citation type="submission" date="2008-02" db="EMBL/GenBank/DDBJ databases">
        <title>Complete sequence of chromosome of Methylobacterium sp. 4-46.</title>
        <authorList>
            <consortium name="US DOE Joint Genome Institute"/>
            <person name="Copeland A."/>
            <person name="Lucas S."/>
            <person name="Lapidus A."/>
            <person name="Glavina del Rio T."/>
            <person name="Dalin E."/>
            <person name="Tice H."/>
            <person name="Bruce D."/>
            <person name="Goodwin L."/>
            <person name="Pitluck S."/>
            <person name="Chertkov O."/>
            <person name="Brettin T."/>
            <person name="Detter J.C."/>
            <person name="Han C."/>
            <person name="Kuske C.R."/>
            <person name="Schmutz J."/>
            <person name="Larimer F."/>
            <person name="Land M."/>
            <person name="Hauser L."/>
            <person name="Kyrpides N."/>
            <person name="Ivanova N."/>
            <person name="Marx C.J."/>
            <person name="Richardson P."/>
        </authorList>
    </citation>
    <scope>NUCLEOTIDE SEQUENCE [LARGE SCALE GENOMIC DNA]</scope>
    <source>
        <strain>4-46</strain>
    </source>
</reference>
<accession>B0UHV4</accession>
<comment type="function">
    <text evidence="1">This protein binds to the 23S rRNA, and is important in its secondary structure. It is located near the subunit interface in the base of the L7/L12 stalk, and near the tRNA binding site of the peptidyltransferase center.</text>
</comment>
<comment type="subunit">
    <text evidence="1">Part of the 50S ribosomal subunit.</text>
</comment>
<comment type="similarity">
    <text evidence="1">Belongs to the universal ribosomal protein uL6 family.</text>
</comment>
<gene>
    <name evidence="1" type="primary">rplF</name>
    <name type="ordered locus">M446_0338</name>
</gene>
<organism>
    <name type="scientific">Methylobacterium sp. (strain 4-46)</name>
    <dbReference type="NCBI Taxonomy" id="426117"/>
    <lineage>
        <taxon>Bacteria</taxon>
        <taxon>Pseudomonadati</taxon>
        <taxon>Pseudomonadota</taxon>
        <taxon>Alphaproteobacteria</taxon>
        <taxon>Hyphomicrobiales</taxon>
        <taxon>Methylobacteriaceae</taxon>
        <taxon>Methylobacterium</taxon>
    </lineage>
</organism>
<keyword id="KW-0687">Ribonucleoprotein</keyword>
<keyword id="KW-0689">Ribosomal protein</keyword>
<keyword id="KW-0694">RNA-binding</keyword>
<keyword id="KW-0699">rRNA-binding</keyword>
<dbReference type="EMBL" id="CP000943">
    <property type="protein sequence ID" value="ACA14909.1"/>
    <property type="molecule type" value="Genomic_DNA"/>
</dbReference>
<dbReference type="RefSeq" id="WP_012330327.1">
    <property type="nucleotide sequence ID" value="NC_010511.1"/>
</dbReference>
<dbReference type="SMR" id="B0UHV4"/>
<dbReference type="STRING" id="426117.M446_0338"/>
<dbReference type="KEGG" id="met:M446_0338"/>
<dbReference type="eggNOG" id="COG0097">
    <property type="taxonomic scope" value="Bacteria"/>
</dbReference>
<dbReference type="HOGENOM" id="CLU_065464_1_2_5"/>
<dbReference type="GO" id="GO:0022625">
    <property type="term" value="C:cytosolic large ribosomal subunit"/>
    <property type="evidence" value="ECO:0007669"/>
    <property type="project" value="TreeGrafter"/>
</dbReference>
<dbReference type="GO" id="GO:0019843">
    <property type="term" value="F:rRNA binding"/>
    <property type="evidence" value="ECO:0007669"/>
    <property type="project" value="UniProtKB-UniRule"/>
</dbReference>
<dbReference type="GO" id="GO:0003735">
    <property type="term" value="F:structural constituent of ribosome"/>
    <property type="evidence" value="ECO:0007669"/>
    <property type="project" value="InterPro"/>
</dbReference>
<dbReference type="GO" id="GO:0002181">
    <property type="term" value="P:cytoplasmic translation"/>
    <property type="evidence" value="ECO:0007669"/>
    <property type="project" value="TreeGrafter"/>
</dbReference>
<dbReference type="FunFam" id="3.90.930.12:FF:000001">
    <property type="entry name" value="50S ribosomal protein L6"/>
    <property type="match status" value="1"/>
</dbReference>
<dbReference type="FunFam" id="3.90.930.12:FF:000002">
    <property type="entry name" value="50S ribosomal protein L6"/>
    <property type="match status" value="1"/>
</dbReference>
<dbReference type="Gene3D" id="3.90.930.12">
    <property type="entry name" value="Ribosomal protein L6, alpha-beta domain"/>
    <property type="match status" value="2"/>
</dbReference>
<dbReference type="HAMAP" id="MF_01365_B">
    <property type="entry name" value="Ribosomal_uL6_B"/>
    <property type="match status" value="1"/>
</dbReference>
<dbReference type="InterPro" id="IPR000702">
    <property type="entry name" value="Ribosomal_uL6-like"/>
</dbReference>
<dbReference type="InterPro" id="IPR036789">
    <property type="entry name" value="Ribosomal_uL6-like_a/b-dom_sf"/>
</dbReference>
<dbReference type="InterPro" id="IPR020040">
    <property type="entry name" value="Ribosomal_uL6_a/b-dom"/>
</dbReference>
<dbReference type="InterPro" id="IPR019906">
    <property type="entry name" value="Ribosomal_uL6_bac-type"/>
</dbReference>
<dbReference type="InterPro" id="IPR002358">
    <property type="entry name" value="Ribosomal_uL6_CS"/>
</dbReference>
<dbReference type="NCBIfam" id="TIGR03654">
    <property type="entry name" value="L6_bact"/>
    <property type="match status" value="1"/>
</dbReference>
<dbReference type="PANTHER" id="PTHR11655">
    <property type="entry name" value="60S/50S RIBOSOMAL PROTEIN L6/L9"/>
    <property type="match status" value="1"/>
</dbReference>
<dbReference type="PANTHER" id="PTHR11655:SF14">
    <property type="entry name" value="LARGE RIBOSOMAL SUBUNIT PROTEIN UL6M"/>
    <property type="match status" value="1"/>
</dbReference>
<dbReference type="Pfam" id="PF00347">
    <property type="entry name" value="Ribosomal_L6"/>
    <property type="match status" value="2"/>
</dbReference>
<dbReference type="PIRSF" id="PIRSF002162">
    <property type="entry name" value="Ribosomal_L6"/>
    <property type="match status" value="1"/>
</dbReference>
<dbReference type="PRINTS" id="PR00059">
    <property type="entry name" value="RIBOSOMALL6"/>
</dbReference>
<dbReference type="SUPFAM" id="SSF56053">
    <property type="entry name" value="Ribosomal protein L6"/>
    <property type="match status" value="2"/>
</dbReference>
<dbReference type="PROSITE" id="PS00525">
    <property type="entry name" value="RIBOSOMAL_L6_1"/>
    <property type="match status" value="1"/>
</dbReference>
<sequence length="177" mass="19175">MSRVGKKPVTVPAGVTATVDGQNVKIKGAKGELSFRVPDLVEVSHADGAISVQPRSQTKEARAMWGLSRAQVANLIEGVTKGFEKKLEINGVGYRAAVAGKVLKLSLGYSHDVEYEIPAGITITTPRPVEIIVAGIDKQRVGQIAAEIREYRGPEPYKGKGVKYSDEFIFRKEGKKK</sequence>
<feature type="chain" id="PRO_1000144017" description="Large ribosomal subunit protein uL6">
    <location>
        <begin position="1"/>
        <end position="177"/>
    </location>
</feature>
<name>RL6_METS4</name>
<protein>
    <recommendedName>
        <fullName evidence="1">Large ribosomal subunit protein uL6</fullName>
    </recommendedName>
    <alternativeName>
        <fullName evidence="2">50S ribosomal protein L6</fullName>
    </alternativeName>
</protein>